<evidence type="ECO:0000250" key="1">
    <source>
        <dbReference type="UniProtKB" id="Q4WZB3"/>
    </source>
</evidence>
<evidence type="ECO:0000250" key="2">
    <source>
        <dbReference type="UniProtKB" id="Q93NG6"/>
    </source>
</evidence>
<evidence type="ECO:0000269" key="3">
    <source>
    </source>
</evidence>
<evidence type="ECO:0000303" key="4">
    <source>
    </source>
</evidence>
<evidence type="ECO:0000305" key="5"/>
<evidence type="ECO:0000305" key="6">
    <source>
    </source>
</evidence>
<dbReference type="EC" id="3.7.1.-" evidence="6"/>
<dbReference type="EMBL" id="CH445325">
    <property type="protein sequence ID" value="EAT91808.1"/>
    <property type="molecule type" value="Genomic_DNA"/>
</dbReference>
<dbReference type="RefSeq" id="XP_001791003.1">
    <property type="nucleotide sequence ID" value="XM_001790951.1"/>
</dbReference>
<dbReference type="SMR" id="Q0V6Q1"/>
<dbReference type="ESTHER" id="phano-phmG">
    <property type="family name" value="Duf_1100-S"/>
</dbReference>
<dbReference type="GeneID" id="5968092"/>
<dbReference type="KEGG" id="pno:SNOG_00313"/>
<dbReference type="VEuPathDB" id="FungiDB:JI435_003130"/>
<dbReference type="InParanoid" id="Q0V6Q1"/>
<dbReference type="OMA" id="FQMRWEV"/>
<dbReference type="Proteomes" id="UP000001055">
    <property type="component" value="Unassembled WGS sequence"/>
</dbReference>
<dbReference type="GO" id="GO:0016787">
    <property type="term" value="F:hydrolase activity"/>
    <property type="evidence" value="ECO:0000318"/>
    <property type="project" value="GO_Central"/>
</dbReference>
<dbReference type="GO" id="GO:0042438">
    <property type="term" value="P:melanin biosynthetic process"/>
    <property type="evidence" value="ECO:0000318"/>
    <property type="project" value="GO_Central"/>
</dbReference>
<dbReference type="Gene3D" id="1.20.1440.110">
    <property type="entry name" value="acylaminoacyl peptidase"/>
    <property type="match status" value="1"/>
</dbReference>
<dbReference type="Gene3D" id="3.40.50.1820">
    <property type="entry name" value="alpha/beta hydrolase"/>
    <property type="match status" value="1"/>
</dbReference>
<dbReference type="InterPro" id="IPR000073">
    <property type="entry name" value="AB_hydrolase_1"/>
</dbReference>
<dbReference type="InterPro" id="IPR029058">
    <property type="entry name" value="AB_hydrolase_fold"/>
</dbReference>
<dbReference type="InterPro" id="IPR050261">
    <property type="entry name" value="FrsA_esterase"/>
</dbReference>
<dbReference type="PANTHER" id="PTHR22946:SF13">
    <property type="entry name" value="ALPHA_BETA HYDROLASE PSOB"/>
    <property type="match status" value="1"/>
</dbReference>
<dbReference type="PANTHER" id="PTHR22946">
    <property type="entry name" value="DIENELACTONE HYDROLASE DOMAIN-CONTAINING PROTEIN-RELATED"/>
    <property type="match status" value="1"/>
</dbReference>
<dbReference type="Pfam" id="PF12697">
    <property type="entry name" value="Abhydrolase_6"/>
    <property type="match status" value="1"/>
</dbReference>
<dbReference type="SUPFAM" id="SSF53474">
    <property type="entry name" value="alpha/beta-Hydrolases"/>
    <property type="match status" value="1"/>
</dbReference>
<proteinExistence type="inferred from homology"/>
<accession>Q0V6Q1</accession>
<gene>
    <name evidence="4" type="primary">phmG</name>
    <name type="ORF">SNOG_00313</name>
</gene>
<name>PHMG_PHANO</name>
<protein>
    <recommendedName>
        <fullName evidence="4">Hydrolase phmG</fullName>
        <ecNumber evidence="6">3.7.1.-</ecNumber>
    </recommendedName>
    <alternativeName>
        <fullName evidence="4">Phomacin biosynthesis cluster protein G</fullName>
    </alternativeName>
</protein>
<organism>
    <name type="scientific">Phaeosphaeria nodorum (strain SN15 / ATCC MYA-4574 / FGSC 10173)</name>
    <name type="common">Glume blotch fungus</name>
    <name type="synonym">Parastagonospora nodorum</name>
    <dbReference type="NCBI Taxonomy" id="321614"/>
    <lineage>
        <taxon>Eukaryota</taxon>
        <taxon>Fungi</taxon>
        <taxon>Dikarya</taxon>
        <taxon>Ascomycota</taxon>
        <taxon>Pezizomycotina</taxon>
        <taxon>Dothideomycetes</taxon>
        <taxon>Pleosporomycetidae</taxon>
        <taxon>Pleosporales</taxon>
        <taxon>Pleosporineae</taxon>
        <taxon>Phaeosphaeriaceae</taxon>
        <taxon>Parastagonospora</taxon>
    </lineage>
</organism>
<feature type="chain" id="PRO_0000449474" description="Hydrolase phmG">
    <location>
        <begin position="1"/>
        <end position="442"/>
    </location>
</feature>
<feature type="active site" description="Nucleophile" evidence="1">
    <location>
        <position position="259"/>
    </location>
</feature>
<keyword id="KW-0378">Hydrolase</keyword>
<keyword id="KW-0843">Virulence</keyword>
<sequence>MTNSSPPFSTIHQFFPGNTFLNFESVRILSTAPYGGCDAAEFLTAIAAINPKDPQTWADAWSHMAHLAETMAEEALSRGDVVAARDGFLRASSYTRASGYLYINGPTLDEHHPLAFEISKKVQSLFRRALPFLDCDVHVVEIPYVVDSPERKEVMLPGYLYLPNAQHRLPDGKIPVLLNTGGADSVQEELYYIHPQGGHTRGYAVLTFEGPGQGIVLREHGLHMRPDWEVTGWKGYSSTLKREVGVELDLDRIAVAGASMGGYYALRAAKDSRIKACVAIDPFYDMWDFGTKHISGLFMSAWTGGWIGDDWVDRIIRLGMRTNFQLRWEVGVTAAFWGIASPAKILKEMSKYSLKGGYLEKVQCPVLVTGAGKSLYFDTEEHTMKVFDDLGHLEERWRRVWMPNRPEEGGLQAKIGAFGLANMKAYGFLDEVFGIRRVTVES</sequence>
<comment type="function">
    <text evidence="3 6">Hydrolyase; part of the gene cluster that mediates the biosynthesis of the mycotoxins phomacins, leucine-derived cytochalasans with potent actin polymerization-inhibitory activities and monocot-specific antigerminative activities (PubMed:31815421). The first step in the pathway is catalyzed by the hybrid PKS-NRPS phmA, assisted by the enoyl reductase phmE, that are responsible for fusion of the leucine precursor and the polyketide backbone to produce a 2-pyrrolidone intermediate (PubMed:31815421). The polyketide synthase module (PKS) of phmA is responsible for the synthesis of the polyketide backbone and the downstream nonribosomal peptide synthetase (NRPS) amidates the carboxyl end of the polyketide with the leucine precursor (PubMed:31815421). Because phmA lacks a designated enoylreductase (ER) domain, the required activity is provided the enoyl reductase phmE (PubMed:31815421). Reduction by the hydrolyase phmG, followed by dehydration and intra-molecular Diels-Alder cyclization by the Diels-Alderase phmD then yield the required isoindolone-fused macrocycle (Probable). A number of oxidative steps catalyzed by the tailoring cytochrome P450 monooxygenase phmB, the FAD-linked oxidoreductase phmC and the short-chain dehydrogenase/reductase phmF, are further required to afford the final products, phomacin D and phomacin E (PubMed:31815421).</text>
</comment>
<comment type="pathway">
    <text evidence="6">Mycotoxin biosynthesis.</text>
</comment>
<comment type="subunit">
    <text evidence="2">Homodimer.</text>
</comment>
<comment type="similarity">
    <text evidence="5">Belongs to the AB hydrolase superfamily. FUS2 hydrolase family.</text>
</comment>
<reference key="1">
    <citation type="journal article" date="2007" name="Plant Cell">
        <title>Dothideomycete-plant interactions illuminated by genome sequencing and EST analysis of the wheat pathogen Stagonospora nodorum.</title>
        <authorList>
            <person name="Hane J.K."/>
            <person name="Lowe R.G.T."/>
            <person name="Solomon P.S."/>
            <person name="Tan K.-C."/>
            <person name="Schoch C.L."/>
            <person name="Spatafora J.W."/>
            <person name="Crous P.W."/>
            <person name="Kodira C.D."/>
            <person name="Birren B.W."/>
            <person name="Galagan J.E."/>
            <person name="Torriani S.F.F."/>
            <person name="McDonald B.A."/>
            <person name="Oliver R.P."/>
        </authorList>
    </citation>
    <scope>NUCLEOTIDE SEQUENCE [LARGE SCALE GENOMIC DNA]</scope>
    <source>
        <strain>SN15 / ATCC MYA-4574 / FGSC 10173</strain>
    </source>
</reference>
<reference key="2">
    <citation type="journal article" date="2020" name="ACS Chem. Biol.">
        <title>Genomics-driven discovery of phytotoxic cytochalasans involved in the virulence of the wheat pathogen Parastagonospora nodorum.</title>
        <authorList>
            <person name="Li H."/>
            <person name="Wei H."/>
            <person name="Hu J."/>
            <person name="Lacey E."/>
            <person name="Sobolev A.N."/>
            <person name="Stubbs K.A."/>
            <person name="Solomon P.S."/>
            <person name="Chooi Y.H."/>
        </authorList>
    </citation>
    <scope>FUNCTION</scope>
    <scope>PATHWAY</scope>
</reference>